<accession>Q1J7G9</accession>
<gene>
    <name evidence="1" type="primary">ligA</name>
    <name type="ordered locus">MGAS10750_Spy0655</name>
</gene>
<keyword id="KW-0227">DNA damage</keyword>
<keyword id="KW-0234">DNA repair</keyword>
<keyword id="KW-0235">DNA replication</keyword>
<keyword id="KW-0436">Ligase</keyword>
<keyword id="KW-0460">Magnesium</keyword>
<keyword id="KW-0464">Manganese</keyword>
<keyword id="KW-0479">Metal-binding</keyword>
<keyword id="KW-0520">NAD</keyword>
<keyword id="KW-0862">Zinc</keyword>
<proteinExistence type="inferred from homology"/>
<sequence>MKKRIKELTDLLNRYRYDYYTKDAPSVSDSDYDKLYRELVTLEQSYPEYVLQDSPTQQVGGTILKGFEKYRHQYPLFSLQDAFSREELDAFDKRVKAEFPNATYLAELKIDGLSISLSYENGFLQVGATRGDGNIGENITENIKKIKDIPHQLSEPLTITVRGEAYMSRQSFKAINEARQENGETEFANPRNAAAGTLRQLDTAVVAKRQLATFLYQEASPTARNQQNEVLAELADLGFSVNPYYQLTSSMDEIWDFIKTIEAKRDQLAYDIDGVVIKVNSLAMQEELGFTVKAPRWAIAYKFPAEEKEAEILSVDWTVGRTGVVTPTANLTPVQLAGTTVSRATLHNVDYIAEKDIRIGDTVIVYKAGDIIPAVLNVVMSKRNQQEVMLIPKLCPSCGSELVHFEDEVALRCINPLCPSLIQRSLEHFASRDAMNITGLGPAIVEKLFLAGFVHDVADIYQLTKENFMQLDGIKEKSADKLLAAIEASKSNSAEKLLFGLGIRHIGSKVSRLILEVYGDISALLTAKEEEIARIDGLGSTIAQSLTQYFEQKTAAILVDELKTAGVNMHYSGQKVNSDAALFGLTVVLTGKLNQLNRNEAKDKLEALGAKVTGSVSKKTDLVIAGSDAGSKLEKAKSLGIRIEDEDWLRQL</sequence>
<protein>
    <recommendedName>
        <fullName evidence="1">DNA ligase</fullName>
        <ecNumber evidence="1">6.5.1.2</ecNumber>
    </recommendedName>
    <alternativeName>
        <fullName evidence="1">Polydeoxyribonucleotide synthase [NAD(+)]</fullName>
    </alternativeName>
</protein>
<comment type="function">
    <text evidence="1">DNA ligase that catalyzes the formation of phosphodiester linkages between 5'-phosphoryl and 3'-hydroxyl groups in double-stranded DNA using NAD as a coenzyme and as the energy source for the reaction. It is essential for DNA replication and repair of damaged DNA.</text>
</comment>
<comment type="catalytic activity">
    <reaction evidence="1">
        <text>NAD(+) + (deoxyribonucleotide)n-3'-hydroxyl + 5'-phospho-(deoxyribonucleotide)m = (deoxyribonucleotide)n+m + AMP + beta-nicotinamide D-nucleotide.</text>
        <dbReference type="EC" id="6.5.1.2"/>
    </reaction>
</comment>
<comment type="cofactor">
    <cofactor evidence="1">
        <name>Mg(2+)</name>
        <dbReference type="ChEBI" id="CHEBI:18420"/>
    </cofactor>
    <cofactor evidence="1">
        <name>Mn(2+)</name>
        <dbReference type="ChEBI" id="CHEBI:29035"/>
    </cofactor>
</comment>
<comment type="similarity">
    <text evidence="1">Belongs to the NAD-dependent DNA ligase family. LigA subfamily.</text>
</comment>
<evidence type="ECO:0000255" key="1">
    <source>
        <dbReference type="HAMAP-Rule" id="MF_01588"/>
    </source>
</evidence>
<name>DNLJ_STRPF</name>
<dbReference type="EC" id="6.5.1.2" evidence="1"/>
<dbReference type="EMBL" id="CP000262">
    <property type="protein sequence ID" value="ABF37605.1"/>
    <property type="molecule type" value="Genomic_DNA"/>
</dbReference>
<dbReference type="SMR" id="Q1J7G9"/>
<dbReference type="KEGG" id="spi:MGAS10750_Spy0655"/>
<dbReference type="HOGENOM" id="CLU_007764_2_1_9"/>
<dbReference type="Proteomes" id="UP000002434">
    <property type="component" value="Chromosome"/>
</dbReference>
<dbReference type="GO" id="GO:0005829">
    <property type="term" value="C:cytosol"/>
    <property type="evidence" value="ECO:0007669"/>
    <property type="project" value="TreeGrafter"/>
</dbReference>
<dbReference type="GO" id="GO:0003677">
    <property type="term" value="F:DNA binding"/>
    <property type="evidence" value="ECO:0007669"/>
    <property type="project" value="InterPro"/>
</dbReference>
<dbReference type="GO" id="GO:0003911">
    <property type="term" value="F:DNA ligase (NAD+) activity"/>
    <property type="evidence" value="ECO:0007669"/>
    <property type="project" value="UniProtKB-UniRule"/>
</dbReference>
<dbReference type="GO" id="GO:0046872">
    <property type="term" value="F:metal ion binding"/>
    <property type="evidence" value="ECO:0007669"/>
    <property type="project" value="UniProtKB-KW"/>
</dbReference>
<dbReference type="GO" id="GO:0006281">
    <property type="term" value="P:DNA repair"/>
    <property type="evidence" value="ECO:0007669"/>
    <property type="project" value="UniProtKB-KW"/>
</dbReference>
<dbReference type="GO" id="GO:0006260">
    <property type="term" value="P:DNA replication"/>
    <property type="evidence" value="ECO:0007669"/>
    <property type="project" value="UniProtKB-KW"/>
</dbReference>
<dbReference type="CDD" id="cd17748">
    <property type="entry name" value="BRCT_DNA_ligase_like"/>
    <property type="match status" value="1"/>
</dbReference>
<dbReference type="CDD" id="cd00114">
    <property type="entry name" value="LIGANc"/>
    <property type="match status" value="1"/>
</dbReference>
<dbReference type="FunFam" id="1.10.150.20:FF:000007">
    <property type="entry name" value="DNA ligase"/>
    <property type="match status" value="1"/>
</dbReference>
<dbReference type="FunFam" id="1.10.287.610:FF:000002">
    <property type="entry name" value="DNA ligase"/>
    <property type="match status" value="1"/>
</dbReference>
<dbReference type="FunFam" id="2.40.50.140:FF:000012">
    <property type="entry name" value="DNA ligase"/>
    <property type="match status" value="1"/>
</dbReference>
<dbReference type="FunFam" id="3.30.470.30:FF:000001">
    <property type="entry name" value="DNA ligase"/>
    <property type="match status" value="1"/>
</dbReference>
<dbReference type="Gene3D" id="6.20.10.30">
    <property type="match status" value="1"/>
</dbReference>
<dbReference type="Gene3D" id="1.10.150.20">
    <property type="entry name" value="5' to 3' exonuclease, C-terminal subdomain"/>
    <property type="match status" value="2"/>
</dbReference>
<dbReference type="Gene3D" id="3.40.50.10190">
    <property type="entry name" value="BRCT domain"/>
    <property type="match status" value="1"/>
</dbReference>
<dbReference type="Gene3D" id="3.30.470.30">
    <property type="entry name" value="DNA ligase/mRNA capping enzyme"/>
    <property type="match status" value="1"/>
</dbReference>
<dbReference type="Gene3D" id="1.10.287.610">
    <property type="entry name" value="Helix hairpin bin"/>
    <property type="match status" value="1"/>
</dbReference>
<dbReference type="Gene3D" id="2.40.50.140">
    <property type="entry name" value="Nucleic acid-binding proteins"/>
    <property type="match status" value="1"/>
</dbReference>
<dbReference type="HAMAP" id="MF_01588">
    <property type="entry name" value="DNA_ligase_A"/>
    <property type="match status" value="1"/>
</dbReference>
<dbReference type="InterPro" id="IPR001357">
    <property type="entry name" value="BRCT_dom"/>
</dbReference>
<dbReference type="InterPro" id="IPR036420">
    <property type="entry name" value="BRCT_dom_sf"/>
</dbReference>
<dbReference type="InterPro" id="IPR041663">
    <property type="entry name" value="DisA/LigA_HHH"/>
</dbReference>
<dbReference type="InterPro" id="IPR001679">
    <property type="entry name" value="DNA_ligase"/>
</dbReference>
<dbReference type="InterPro" id="IPR018239">
    <property type="entry name" value="DNA_ligase_AS"/>
</dbReference>
<dbReference type="InterPro" id="IPR033136">
    <property type="entry name" value="DNA_ligase_CS"/>
</dbReference>
<dbReference type="InterPro" id="IPR013839">
    <property type="entry name" value="DNAligase_adenylation"/>
</dbReference>
<dbReference type="InterPro" id="IPR013840">
    <property type="entry name" value="DNAligase_N"/>
</dbReference>
<dbReference type="InterPro" id="IPR003583">
    <property type="entry name" value="Hlx-hairpin-Hlx_DNA-bd_motif"/>
</dbReference>
<dbReference type="InterPro" id="IPR012340">
    <property type="entry name" value="NA-bd_OB-fold"/>
</dbReference>
<dbReference type="InterPro" id="IPR004150">
    <property type="entry name" value="NAD_DNA_ligase_OB"/>
</dbReference>
<dbReference type="InterPro" id="IPR010994">
    <property type="entry name" value="RuvA_2-like"/>
</dbReference>
<dbReference type="InterPro" id="IPR004149">
    <property type="entry name" value="Znf_DNAligase_C4"/>
</dbReference>
<dbReference type="NCBIfam" id="TIGR00575">
    <property type="entry name" value="dnlj"/>
    <property type="match status" value="1"/>
</dbReference>
<dbReference type="NCBIfam" id="NF005932">
    <property type="entry name" value="PRK07956.1"/>
    <property type="match status" value="1"/>
</dbReference>
<dbReference type="PANTHER" id="PTHR23389">
    <property type="entry name" value="CHROMOSOME TRANSMISSION FIDELITY FACTOR 18"/>
    <property type="match status" value="1"/>
</dbReference>
<dbReference type="PANTHER" id="PTHR23389:SF9">
    <property type="entry name" value="DNA LIGASE"/>
    <property type="match status" value="1"/>
</dbReference>
<dbReference type="Pfam" id="PF00533">
    <property type="entry name" value="BRCT"/>
    <property type="match status" value="1"/>
</dbReference>
<dbReference type="Pfam" id="PF01653">
    <property type="entry name" value="DNA_ligase_aden"/>
    <property type="match status" value="1"/>
</dbReference>
<dbReference type="Pfam" id="PF03120">
    <property type="entry name" value="DNA_ligase_OB"/>
    <property type="match status" value="1"/>
</dbReference>
<dbReference type="Pfam" id="PF03119">
    <property type="entry name" value="DNA_ligase_ZBD"/>
    <property type="match status" value="1"/>
</dbReference>
<dbReference type="Pfam" id="PF12826">
    <property type="entry name" value="HHH_2"/>
    <property type="match status" value="1"/>
</dbReference>
<dbReference type="Pfam" id="PF14520">
    <property type="entry name" value="HHH_5"/>
    <property type="match status" value="1"/>
</dbReference>
<dbReference type="PIRSF" id="PIRSF001604">
    <property type="entry name" value="LigA"/>
    <property type="match status" value="1"/>
</dbReference>
<dbReference type="SMART" id="SM00292">
    <property type="entry name" value="BRCT"/>
    <property type="match status" value="1"/>
</dbReference>
<dbReference type="SMART" id="SM00278">
    <property type="entry name" value="HhH1"/>
    <property type="match status" value="3"/>
</dbReference>
<dbReference type="SMART" id="SM00532">
    <property type="entry name" value="LIGANc"/>
    <property type="match status" value="1"/>
</dbReference>
<dbReference type="SUPFAM" id="SSF52113">
    <property type="entry name" value="BRCT domain"/>
    <property type="match status" value="1"/>
</dbReference>
<dbReference type="SUPFAM" id="SSF56091">
    <property type="entry name" value="DNA ligase/mRNA capping enzyme, catalytic domain"/>
    <property type="match status" value="1"/>
</dbReference>
<dbReference type="SUPFAM" id="SSF50249">
    <property type="entry name" value="Nucleic acid-binding proteins"/>
    <property type="match status" value="1"/>
</dbReference>
<dbReference type="SUPFAM" id="SSF47781">
    <property type="entry name" value="RuvA domain 2-like"/>
    <property type="match status" value="1"/>
</dbReference>
<dbReference type="PROSITE" id="PS50172">
    <property type="entry name" value="BRCT"/>
    <property type="match status" value="1"/>
</dbReference>
<dbReference type="PROSITE" id="PS01055">
    <property type="entry name" value="DNA_LIGASE_N1"/>
    <property type="match status" value="1"/>
</dbReference>
<dbReference type="PROSITE" id="PS01056">
    <property type="entry name" value="DNA_LIGASE_N2"/>
    <property type="match status" value="1"/>
</dbReference>
<reference key="1">
    <citation type="journal article" date="2006" name="Proc. Natl. Acad. Sci. U.S.A.">
        <title>Molecular genetic anatomy of inter- and intraserotype variation in the human bacterial pathogen group A Streptococcus.</title>
        <authorList>
            <person name="Beres S.B."/>
            <person name="Richter E.W."/>
            <person name="Nagiec M.J."/>
            <person name="Sumby P."/>
            <person name="Porcella S.F."/>
            <person name="DeLeo F.R."/>
            <person name="Musser J.M."/>
        </authorList>
    </citation>
    <scope>NUCLEOTIDE SEQUENCE [LARGE SCALE GENOMIC DNA]</scope>
    <source>
        <strain>MGAS10750</strain>
    </source>
</reference>
<organism>
    <name type="scientific">Streptococcus pyogenes serotype M4 (strain MGAS10750)</name>
    <dbReference type="NCBI Taxonomy" id="370554"/>
    <lineage>
        <taxon>Bacteria</taxon>
        <taxon>Bacillati</taxon>
        <taxon>Bacillota</taxon>
        <taxon>Bacilli</taxon>
        <taxon>Lactobacillales</taxon>
        <taxon>Streptococcaceae</taxon>
        <taxon>Streptococcus</taxon>
    </lineage>
</organism>
<feature type="chain" id="PRO_0000313464" description="DNA ligase">
    <location>
        <begin position="1"/>
        <end position="652"/>
    </location>
</feature>
<feature type="domain" description="BRCT" evidence="1">
    <location>
        <begin position="577"/>
        <end position="652"/>
    </location>
</feature>
<feature type="active site" description="N6-AMP-lysine intermediate" evidence="1">
    <location>
        <position position="109"/>
    </location>
</feature>
<feature type="binding site" evidence="1">
    <location>
        <begin position="29"/>
        <end position="33"/>
    </location>
    <ligand>
        <name>NAD(+)</name>
        <dbReference type="ChEBI" id="CHEBI:57540"/>
    </ligand>
</feature>
<feature type="binding site" evidence="1">
    <location>
        <begin position="78"/>
        <end position="79"/>
    </location>
    <ligand>
        <name>NAD(+)</name>
        <dbReference type="ChEBI" id="CHEBI:57540"/>
    </ligand>
</feature>
<feature type="binding site" evidence="1">
    <location>
        <position position="107"/>
    </location>
    <ligand>
        <name>NAD(+)</name>
        <dbReference type="ChEBI" id="CHEBI:57540"/>
    </ligand>
</feature>
<feature type="binding site" evidence="1">
    <location>
        <position position="130"/>
    </location>
    <ligand>
        <name>NAD(+)</name>
        <dbReference type="ChEBI" id="CHEBI:57540"/>
    </ligand>
</feature>
<feature type="binding site" evidence="1">
    <location>
        <position position="164"/>
    </location>
    <ligand>
        <name>NAD(+)</name>
        <dbReference type="ChEBI" id="CHEBI:57540"/>
    </ligand>
</feature>
<feature type="binding site" evidence="1">
    <location>
        <position position="278"/>
    </location>
    <ligand>
        <name>NAD(+)</name>
        <dbReference type="ChEBI" id="CHEBI:57540"/>
    </ligand>
</feature>
<feature type="binding site" evidence="1">
    <location>
        <position position="302"/>
    </location>
    <ligand>
        <name>NAD(+)</name>
        <dbReference type="ChEBI" id="CHEBI:57540"/>
    </ligand>
</feature>
<feature type="binding site" evidence="1">
    <location>
        <position position="395"/>
    </location>
    <ligand>
        <name>Zn(2+)</name>
        <dbReference type="ChEBI" id="CHEBI:29105"/>
    </ligand>
</feature>
<feature type="binding site" evidence="1">
    <location>
        <position position="398"/>
    </location>
    <ligand>
        <name>Zn(2+)</name>
        <dbReference type="ChEBI" id="CHEBI:29105"/>
    </ligand>
</feature>
<feature type="binding site" evidence="1">
    <location>
        <position position="413"/>
    </location>
    <ligand>
        <name>Zn(2+)</name>
        <dbReference type="ChEBI" id="CHEBI:29105"/>
    </ligand>
</feature>
<feature type="binding site" evidence="1">
    <location>
        <position position="418"/>
    </location>
    <ligand>
        <name>Zn(2+)</name>
        <dbReference type="ChEBI" id="CHEBI:29105"/>
    </ligand>
</feature>